<accession>P50024</accession>
<dbReference type="EMBL" id="U15278">
    <property type="protein sequence ID" value="AAA67725.1"/>
    <property type="molecule type" value="Genomic_DNA"/>
</dbReference>
<dbReference type="SMR" id="P50024"/>
<dbReference type="STRING" id="91892.BIZ52_00645"/>
<dbReference type="eggNOG" id="COG1651">
    <property type="taxonomic scope" value="Bacteria"/>
</dbReference>
<dbReference type="BRENDA" id="1.8.4.2">
    <property type="organism ID" value="2943"/>
</dbReference>
<dbReference type="GO" id="GO:0042597">
    <property type="term" value="C:periplasmic space"/>
    <property type="evidence" value="ECO:0007669"/>
    <property type="project" value="UniProtKB-SubCell"/>
</dbReference>
<dbReference type="GO" id="GO:0015036">
    <property type="term" value="F:disulfide oxidoreductase activity"/>
    <property type="evidence" value="ECO:0007669"/>
    <property type="project" value="UniProtKB-ARBA"/>
</dbReference>
<dbReference type="CDD" id="cd03019">
    <property type="entry name" value="DsbA_DsbA"/>
    <property type="match status" value="1"/>
</dbReference>
<dbReference type="Gene3D" id="3.40.30.10">
    <property type="entry name" value="Glutaredoxin"/>
    <property type="match status" value="1"/>
</dbReference>
<dbReference type="InterPro" id="IPR001853">
    <property type="entry name" value="DSBA-like_thioredoxin_dom"/>
</dbReference>
<dbReference type="InterPro" id="IPR023205">
    <property type="entry name" value="DsbA/DsbL"/>
</dbReference>
<dbReference type="InterPro" id="IPR050824">
    <property type="entry name" value="Thiol_disulfide_DsbA"/>
</dbReference>
<dbReference type="InterPro" id="IPR036249">
    <property type="entry name" value="Thioredoxin-like_sf"/>
</dbReference>
<dbReference type="InterPro" id="IPR017937">
    <property type="entry name" value="Thioredoxin_CS"/>
</dbReference>
<dbReference type="InterPro" id="IPR013766">
    <property type="entry name" value="Thioredoxin_domain"/>
</dbReference>
<dbReference type="PANTHER" id="PTHR35891">
    <property type="entry name" value="THIOL:DISULFIDE INTERCHANGE PROTEIN DSBA"/>
    <property type="match status" value="1"/>
</dbReference>
<dbReference type="PANTHER" id="PTHR35891:SF2">
    <property type="entry name" value="THIOL:DISULFIDE INTERCHANGE PROTEIN DSBA"/>
    <property type="match status" value="1"/>
</dbReference>
<dbReference type="Pfam" id="PF01323">
    <property type="entry name" value="DSBA"/>
    <property type="match status" value="1"/>
</dbReference>
<dbReference type="PIRSF" id="PIRSF001488">
    <property type="entry name" value="Tdi_protein"/>
    <property type="match status" value="1"/>
</dbReference>
<dbReference type="SUPFAM" id="SSF52833">
    <property type="entry name" value="Thioredoxin-like"/>
    <property type="match status" value="1"/>
</dbReference>
<dbReference type="PROSITE" id="PS00194">
    <property type="entry name" value="THIOREDOXIN_1"/>
    <property type="match status" value="1"/>
</dbReference>
<dbReference type="PROSITE" id="PS51352">
    <property type="entry name" value="THIOREDOXIN_2"/>
    <property type="match status" value="1"/>
</dbReference>
<sequence>MFKKLIGLLFLMPMTALATQFIEGKDYQTVASAQLSTNKDKTPLITEFFSYGCPWCYKIDAPLNDWATRMGKGAHLERVPVVFKPNWDLYAKAYYTAKTLAMSDKMNPILFKAIQEDKNPLATKQSMVDFFVAHGVDREIAKSAFENSPTIDMRVNSGMSLMAHYQINAVPAFVVNNKYKTDLQMAGSEERLFEILNYLVRKSA</sequence>
<protein>
    <recommendedName>
        <fullName>Thiol:disulfide interchange protein DsbA</fullName>
    </recommendedName>
</protein>
<feature type="signal peptide" evidence="2">
    <location>
        <begin position="1"/>
        <end position="18"/>
    </location>
</feature>
<feature type="chain" id="PRO_0000034261" description="Thiol:disulfide interchange protein DsbA">
    <location>
        <begin position="19"/>
        <end position="204"/>
    </location>
</feature>
<feature type="domain" description="Thioredoxin" evidence="3">
    <location>
        <begin position="19"/>
        <end position="146"/>
    </location>
</feature>
<feature type="disulfide bond" description="Redox-active" evidence="3">
    <location>
        <begin position="53"/>
        <end position="56"/>
    </location>
</feature>
<comment type="function">
    <text evidence="1">Involved in disulfide-bond formation. Acts by transferring its disulfide bond to other proteins (By similarity).</text>
</comment>
<comment type="subcellular location">
    <subcellularLocation>
        <location>Periplasm</location>
    </subcellularLocation>
</comment>
<comment type="similarity">
    <text evidence="4">Belongs to the thioredoxin family. DsbA subfamily.</text>
</comment>
<gene>
    <name type="primary">dsbA</name>
</gene>
<proteinExistence type="inferred from homology"/>
<organism>
    <name type="scientific">Legionella pneumophila</name>
    <dbReference type="NCBI Taxonomy" id="446"/>
    <lineage>
        <taxon>Bacteria</taxon>
        <taxon>Pseudomonadati</taxon>
        <taxon>Pseudomonadota</taxon>
        <taxon>Gammaproteobacteria</taxon>
        <taxon>Legionellales</taxon>
        <taxon>Legionellaceae</taxon>
        <taxon>Legionella</taxon>
    </lineage>
</organism>
<reference key="1">
    <citation type="submission" date="1994-09" db="EMBL/GenBank/DDBJ databases">
        <authorList>
            <person name="Sadosky A.B."/>
            <person name="Shuman H.A."/>
        </authorList>
    </citation>
    <scope>NUCLEOTIDE SEQUENCE [GENOMIC DNA]</scope>
    <source>
        <strain>JR32</strain>
    </source>
</reference>
<evidence type="ECO:0000250" key="1"/>
<evidence type="ECO:0000255" key="2"/>
<evidence type="ECO:0000255" key="3">
    <source>
        <dbReference type="PROSITE-ProRule" id="PRU00691"/>
    </source>
</evidence>
<evidence type="ECO:0000305" key="4"/>
<name>DSBA_LEGPN</name>
<keyword id="KW-1015">Disulfide bond</keyword>
<keyword id="KW-0574">Periplasm</keyword>
<keyword id="KW-0676">Redox-active center</keyword>
<keyword id="KW-0732">Signal</keyword>